<sequence length="248" mass="28668">MFQKVEGIVIRTTDYGETNKIVTIYSREFGKVSAMARGAKKPKSRLAAISQLMTHGHFLIQMGSGLGTLQQGEIISSMKEIREDIFLTAYASFIIELTDKATEDKKHNPYLFEMLYQTLHYMCEGVDPEVLSLIYQTKMLPVLGMRPYFDTCAICHQETDFVAFSVREGGFLCSRHAEQDPYRIPVGEAVHKLLRLFFHFDLHRLGNVSVKDSTKKQMRTVLNTYYDEYCGIYLKTRRFLEQLDKFQI</sequence>
<proteinExistence type="inferred from homology"/>
<protein>
    <recommendedName>
        <fullName evidence="1">DNA repair protein RecO</fullName>
    </recommendedName>
    <alternativeName>
        <fullName evidence="1">Recombination protein O</fullName>
    </alternativeName>
</protein>
<comment type="function">
    <text evidence="1">Involved in DNA repair and RecF pathway recombination.</text>
</comment>
<comment type="similarity">
    <text evidence="1">Belongs to the RecO family.</text>
</comment>
<accession>A9VHS5</accession>
<evidence type="ECO:0000255" key="1">
    <source>
        <dbReference type="HAMAP-Rule" id="MF_00201"/>
    </source>
</evidence>
<gene>
    <name evidence="1" type="primary">recO</name>
    <name type="ordered locus">BcerKBAB4_4149</name>
</gene>
<reference key="1">
    <citation type="journal article" date="2008" name="Chem. Biol. Interact.">
        <title>Extending the Bacillus cereus group genomics to putative food-borne pathogens of different toxicity.</title>
        <authorList>
            <person name="Lapidus A."/>
            <person name="Goltsman E."/>
            <person name="Auger S."/>
            <person name="Galleron N."/>
            <person name="Segurens B."/>
            <person name="Dossat C."/>
            <person name="Land M.L."/>
            <person name="Broussolle V."/>
            <person name="Brillard J."/>
            <person name="Guinebretiere M.-H."/>
            <person name="Sanchis V."/>
            <person name="Nguen-the C."/>
            <person name="Lereclus D."/>
            <person name="Richardson P."/>
            <person name="Wincker P."/>
            <person name="Weissenbach J."/>
            <person name="Ehrlich S.D."/>
            <person name="Sorokin A."/>
        </authorList>
    </citation>
    <scope>NUCLEOTIDE SEQUENCE [LARGE SCALE GENOMIC DNA]</scope>
    <source>
        <strain>KBAB4</strain>
    </source>
</reference>
<keyword id="KW-0227">DNA damage</keyword>
<keyword id="KW-0233">DNA recombination</keyword>
<keyword id="KW-0234">DNA repair</keyword>
<name>RECO_BACMK</name>
<dbReference type="EMBL" id="CP000903">
    <property type="protein sequence ID" value="ABY45310.1"/>
    <property type="molecule type" value="Genomic_DNA"/>
</dbReference>
<dbReference type="RefSeq" id="WP_002129136.1">
    <property type="nucleotide sequence ID" value="NC_010184.1"/>
</dbReference>
<dbReference type="SMR" id="A9VHS5"/>
<dbReference type="GeneID" id="66266127"/>
<dbReference type="KEGG" id="bwe:BcerKBAB4_4149"/>
<dbReference type="eggNOG" id="COG1381">
    <property type="taxonomic scope" value="Bacteria"/>
</dbReference>
<dbReference type="HOGENOM" id="CLU_066632_4_0_9"/>
<dbReference type="Proteomes" id="UP000002154">
    <property type="component" value="Chromosome"/>
</dbReference>
<dbReference type="GO" id="GO:0043590">
    <property type="term" value="C:bacterial nucleoid"/>
    <property type="evidence" value="ECO:0007669"/>
    <property type="project" value="TreeGrafter"/>
</dbReference>
<dbReference type="GO" id="GO:0006310">
    <property type="term" value="P:DNA recombination"/>
    <property type="evidence" value="ECO:0007669"/>
    <property type="project" value="UniProtKB-UniRule"/>
</dbReference>
<dbReference type="GO" id="GO:0006302">
    <property type="term" value="P:double-strand break repair"/>
    <property type="evidence" value="ECO:0007669"/>
    <property type="project" value="TreeGrafter"/>
</dbReference>
<dbReference type="Gene3D" id="2.40.50.140">
    <property type="entry name" value="Nucleic acid-binding proteins"/>
    <property type="match status" value="1"/>
</dbReference>
<dbReference type="Gene3D" id="1.20.1440.120">
    <property type="entry name" value="Recombination protein O, C-terminal domain"/>
    <property type="match status" value="1"/>
</dbReference>
<dbReference type="HAMAP" id="MF_00201">
    <property type="entry name" value="RecO"/>
    <property type="match status" value="1"/>
</dbReference>
<dbReference type="InterPro" id="IPR037278">
    <property type="entry name" value="ARFGAP/RecO"/>
</dbReference>
<dbReference type="InterPro" id="IPR022572">
    <property type="entry name" value="DNA_rep/recomb_RecO_N"/>
</dbReference>
<dbReference type="InterPro" id="IPR012340">
    <property type="entry name" value="NA-bd_OB-fold"/>
</dbReference>
<dbReference type="InterPro" id="IPR003717">
    <property type="entry name" value="RecO"/>
</dbReference>
<dbReference type="InterPro" id="IPR042242">
    <property type="entry name" value="RecO_C"/>
</dbReference>
<dbReference type="NCBIfam" id="TIGR00613">
    <property type="entry name" value="reco"/>
    <property type="match status" value="1"/>
</dbReference>
<dbReference type="PANTHER" id="PTHR33991">
    <property type="entry name" value="DNA REPAIR PROTEIN RECO"/>
    <property type="match status" value="1"/>
</dbReference>
<dbReference type="PANTHER" id="PTHR33991:SF1">
    <property type="entry name" value="DNA REPAIR PROTEIN RECO"/>
    <property type="match status" value="1"/>
</dbReference>
<dbReference type="Pfam" id="PF02565">
    <property type="entry name" value="RecO_C"/>
    <property type="match status" value="1"/>
</dbReference>
<dbReference type="Pfam" id="PF11967">
    <property type="entry name" value="RecO_N"/>
    <property type="match status" value="1"/>
</dbReference>
<dbReference type="SUPFAM" id="SSF57863">
    <property type="entry name" value="ArfGap/RecO-like zinc finger"/>
    <property type="match status" value="1"/>
</dbReference>
<dbReference type="SUPFAM" id="SSF50249">
    <property type="entry name" value="Nucleic acid-binding proteins"/>
    <property type="match status" value="1"/>
</dbReference>
<feature type="chain" id="PRO_1000099364" description="DNA repair protein RecO">
    <location>
        <begin position="1"/>
        <end position="248"/>
    </location>
</feature>
<organism>
    <name type="scientific">Bacillus mycoides (strain KBAB4)</name>
    <name type="common">Bacillus weihenstephanensis</name>
    <dbReference type="NCBI Taxonomy" id="315730"/>
    <lineage>
        <taxon>Bacteria</taxon>
        <taxon>Bacillati</taxon>
        <taxon>Bacillota</taxon>
        <taxon>Bacilli</taxon>
        <taxon>Bacillales</taxon>
        <taxon>Bacillaceae</taxon>
        <taxon>Bacillus</taxon>
        <taxon>Bacillus cereus group</taxon>
    </lineage>
</organism>